<sequence length="215" mass="24698">MSSTEEKFSLKEVLVSFKSCLVDDDQDIIVEQYLNGWKGLVRFMNSLGTIFSFVSKDAVTKIQIMENYLAGTNGERYRTLQSMVEHELSSDLVDLTKRCNNPDSGCRTILRLHRALRWLQLFLEKLRTSNEDSKTSTLCTEAYNDSLANFHPWIIRKTATVAFLALPTRNTFFEVMNVGTTEEVVAMLGESMPYVTKVYDFTHEIYSQHNLLELP</sequence>
<feature type="chain" id="PRO_0000317161" description="Ceramide-1-phosphate transfer protein">
    <location>
        <begin position="1"/>
        <end position="215"/>
    </location>
</feature>
<feature type="binding site" evidence="1">
    <location>
        <position position="57"/>
    </location>
    <ligand>
        <name>an N-acylsphingoid base 1-phosphate</name>
        <dbReference type="ChEBI" id="CHEBI:84404"/>
    </ligand>
</feature>
<feature type="binding site" evidence="1">
    <location>
        <position position="61"/>
    </location>
    <ligand>
        <name>an N-acylsphingoid base 1-phosphate</name>
        <dbReference type="ChEBI" id="CHEBI:84404"/>
    </ligand>
</feature>
<feature type="binding site" evidence="1">
    <location>
        <position position="107"/>
    </location>
    <ligand>
        <name>an N-acylsphingoid base 1-phosphate</name>
        <dbReference type="ChEBI" id="CHEBI:84404"/>
    </ligand>
</feature>
<feature type="binding site" evidence="1">
    <location>
        <position position="111"/>
    </location>
    <ligand>
        <name>an N-acylsphingoid base 1-phosphate</name>
        <dbReference type="ChEBI" id="CHEBI:84404"/>
    </ligand>
</feature>
<feature type="binding site" evidence="1">
    <location>
        <position position="151"/>
    </location>
    <ligand>
        <name>an N-acylsphingoid base 1-phosphate</name>
        <dbReference type="ChEBI" id="CHEBI:84404"/>
    </ligand>
</feature>
<dbReference type="EMBL" id="BC080926">
    <property type="protein sequence ID" value="AAH80926.1"/>
    <property type="molecule type" value="mRNA"/>
</dbReference>
<dbReference type="RefSeq" id="NP_001008043.1">
    <property type="nucleotide sequence ID" value="NM_001008042.1"/>
</dbReference>
<dbReference type="RefSeq" id="XP_012821924.1">
    <property type="nucleotide sequence ID" value="XM_012966470.2"/>
</dbReference>
<dbReference type="RefSeq" id="XP_012821925.1">
    <property type="nucleotide sequence ID" value="XM_012966471.1"/>
</dbReference>
<dbReference type="RefSeq" id="XP_012821926.1">
    <property type="nucleotide sequence ID" value="XM_012966472.2"/>
</dbReference>
<dbReference type="RefSeq" id="XP_012821927.1">
    <property type="nucleotide sequence ID" value="XM_012966473.1"/>
</dbReference>
<dbReference type="SMR" id="Q66JG2"/>
<dbReference type="FunCoup" id="Q66JG2">
    <property type="interactions" value="730"/>
</dbReference>
<dbReference type="STRING" id="8364.ENSXETP00000029931"/>
<dbReference type="PaxDb" id="8364-ENSXETP00000024361"/>
<dbReference type="DNASU" id="493405"/>
<dbReference type="GeneID" id="493405"/>
<dbReference type="KEGG" id="xtr:493405"/>
<dbReference type="AGR" id="Xenbase:XB-GENE-974130"/>
<dbReference type="CTD" id="80772"/>
<dbReference type="Xenbase" id="XB-GENE-974130">
    <property type="gene designation" value="cptp"/>
</dbReference>
<dbReference type="eggNOG" id="KOG4189">
    <property type="taxonomic scope" value="Eukaryota"/>
</dbReference>
<dbReference type="HOGENOM" id="CLU_079649_1_0_1"/>
<dbReference type="InParanoid" id="Q66JG2"/>
<dbReference type="OMA" id="ICTDSYN"/>
<dbReference type="OrthoDB" id="116883at2759"/>
<dbReference type="PhylomeDB" id="Q66JG2"/>
<dbReference type="TreeFam" id="TF316097"/>
<dbReference type="Reactome" id="R-XTR-9845576">
    <property type="pathway name" value="Glycosphingolipid transport"/>
</dbReference>
<dbReference type="Proteomes" id="UP000008143">
    <property type="component" value="Chromosome 7"/>
</dbReference>
<dbReference type="Bgee" id="ENSXETG00000011136">
    <property type="expression patterns" value="Expressed in egg cell and 14 other cell types or tissues"/>
</dbReference>
<dbReference type="ExpressionAtlas" id="Q66JG2">
    <property type="expression patterns" value="differential"/>
</dbReference>
<dbReference type="GO" id="GO:0005829">
    <property type="term" value="C:cytosol"/>
    <property type="evidence" value="ECO:0007669"/>
    <property type="project" value="UniProtKB-SubCell"/>
</dbReference>
<dbReference type="GO" id="GO:0010008">
    <property type="term" value="C:endosome membrane"/>
    <property type="evidence" value="ECO:0007669"/>
    <property type="project" value="UniProtKB-SubCell"/>
</dbReference>
<dbReference type="GO" id="GO:0005794">
    <property type="term" value="C:Golgi apparatus"/>
    <property type="evidence" value="ECO:0007669"/>
    <property type="project" value="UniProtKB-SubCell"/>
</dbReference>
<dbReference type="GO" id="GO:0005640">
    <property type="term" value="C:nuclear outer membrane"/>
    <property type="evidence" value="ECO:0007669"/>
    <property type="project" value="UniProtKB-SubCell"/>
</dbReference>
<dbReference type="GO" id="GO:0005886">
    <property type="term" value="C:plasma membrane"/>
    <property type="evidence" value="ECO:0007669"/>
    <property type="project" value="UniProtKB-SubCell"/>
</dbReference>
<dbReference type="GO" id="GO:1902387">
    <property type="term" value="F:ceramide 1-phosphate binding"/>
    <property type="evidence" value="ECO:0000250"/>
    <property type="project" value="UniProtKB"/>
</dbReference>
<dbReference type="GO" id="GO:1902388">
    <property type="term" value="F:ceramide 1-phosphate transfer activity"/>
    <property type="evidence" value="ECO:0000250"/>
    <property type="project" value="UniProtKB"/>
</dbReference>
<dbReference type="GO" id="GO:0005543">
    <property type="term" value="F:phospholipid binding"/>
    <property type="evidence" value="ECO:0000250"/>
    <property type="project" value="UniProtKB"/>
</dbReference>
<dbReference type="GO" id="GO:1902389">
    <property type="term" value="P:ceramide 1-phosphate transport"/>
    <property type="evidence" value="ECO:0000250"/>
    <property type="project" value="UniProtKB"/>
</dbReference>
<dbReference type="GO" id="GO:0010507">
    <property type="term" value="P:negative regulation of autophagy"/>
    <property type="evidence" value="ECO:0000250"/>
    <property type="project" value="UniProtKB"/>
</dbReference>
<dbReference type="GO" id="GO:0032691">
    <property type="term" value="P:negative regulation of interleukin-1 beta production"/>
    <property type="evidence" value="ECO:0000250"/>
    <property type="project" value="UniProtKB"/>
</dbReference>
<dbReference type="GO" id="GO:1900226">
    <property type="term" value="P:negative regulation of NLRP3 inflammasome complex assembly"/>
    <property type="evidence" value="ECO:0000250"/>
    <property type="project" value="UniProtKB"/>
</dbReference>
<dbReference type="FunFam" id="1.10.3520.10:FF:000002">
    <property type="entry name" value="Ceramide-1-phosphate transfer protein"/>
    <property type="match status" value="1"/>
</dbReference>
<dbReference type="Gene3D" id="1.10.3520.10">
    <property type="entry name" value="Glycolipid transfer protein"/>
    <property type="match status" value="1"/>
</dbReference>
<dbReference type="InterPro" id="IPR036497">
    <property type="entry name" value="GLTP_sf"/>
</dbReference>
<dbReference type="InterPro" id="IPR014830">
    <property type="entry name" value="Glycolipid_transfer_prot_dom"/>
</dbReference>
<dbReference type="PANTHER" id="PTHR10219:SF20">
    <property type="entry name" value="CERAMIDE-1-PHOSPHATE TRANSFER PROTEIN"/>
    <property type="match status" value="1"/>
</dbReference>
<dbReference type="PANTHER" id="PTHR10219">
    <property type="entry name" value="GLYCOLIPID TRANSFER PROTEIN-RELATED"/>
    <property type="match status" value="1"/>
</dbReference>
<dbReference type="Pfam" id="PF08718">
    <property type="entry name" value="GLTP"/>
    <property type="match status" value="1"/>
</dbReference>
<dbReference type="SUPFAM" id="SSF110004">
    <property type="entry name" value="Glycolipid transfer protein, GLTP"/>
    <property type="match status" value="1"/>
</dbReference>
<organism>
    <name type="scientific">Xenopus tropicalis</name>
    <name type="common">Western clawed frog</name>
    <name type="synonym">Silurana tropicalis</name>
    <dbReference type="NCBI Taxonomy" id="8364"/>
    <lineage>
        <taxon>Eukaryota</taxon>
        <taxon>Metazoa</taxon>
        <taxon>Chordata</taxon>
        <taxon>Craniata</taxon>
        <taxon>Vertebrata</taxon>
        <taxon>Euteleostomi</taxon>
        <taxon>Amphibia</taxon>
        <taxon>Batrachia</taxon>
        <taxon>Anura</taxon>
        <taxon>Pipoidea</taxon>
        <taxon>Pipidae</taxon>
        <taxon>Xenopodinae</taxon>
        <taxon>Xenopus</taxon>
        <taxon>Silurana</taxon>
    </lineage>
</organism>
<proteinExistence type="evidence at transcript level"/>
<name>CPTP_XENTR</name>
<protein>
    <recommendedName>
        <fullName>Ceramide-1-phosphate transfer protein</fullName>
    </recommendedName>
    <alternativeName>
        <fullName>Glycolipid transfer protein domain-containing protein 1</fullName>
        <shortName>CPTP</shortName>
    </alternativeName>
</protein>
<evidence type="ECO:0000250" key="1">
    <source>
        <dbReference type="UniProtKB" id="Q5TA50"/>
    </source>
</evidence>
<evidence type="ECO:0000305" key="2"/>
<accession>Q66JG2</accession>
<gene>
    <name type="primary">cptp</name>
    <name type="synonym">gltpd1</name>
</gene>
<comment type="function">
    <text evidence="1">Mediates the intracellular transfer of ceramide-1-phosphate (C1P) between organelle membranes and the cell membrane. Required for normal structure of the Golgi stacks. Can bind phosphoceramides with a variety of aliphatic chains, but has a preference for lipids with saturated C16:0 or monounsaturated C18:1 aliphatic chains, and is inefficient with phosphoceramides containing lignoceryl (C24:0). Plays a role in the regulation of the cellular levels of ceramide-1-phosphate, and thereby contributes to the regulation of phospholipase PLA2G4A activity and the release of arachidonic acid. Has no activity with galactosylceramide, lactosylceramide, sphingomyelin, phosphatidylcholine, phosphatidic acid and ceramide. C1P transfer is stimulated by phosphatidylserine in C1P source vesicles. Regulates autophagy and pyroptosis, but not apoptosis.</text>
</comment>
<comment type="catalytic activity">
    <reaction evidence="1">
        <text>N-(hexadecanoyl)-sphing-4-enine-1-phosphate(in) = N-(hexadecanoyl)-sphing-4-enine-1-phosphate(out)</text>
        <dbReference type="Rhea" id="RHEA:45680"/>
        <dbReference type="ChEBI" id="CHEBI:72963"/>
    </reaction>
    <physiologicalReaction direction="left-to-right" evidence="1">
        <dbReference type="Rhea" id="RHEA:45681"/>
    </physiologicalReaction>
</comment>
<comment type="catalytic activity">
    <reaction evidence="1">
        <text>N-(9Z-octadecenoyl)-sphing-4-enine-1-phosphate(in) = N-(9Z-octadecenoyl)-sphing-4-enine-1-phosphate(out)</text>
        <dbReference type="Rhea" id="RHEA:45688"/>
        <dbReference type="ChEBI" id="CHEBI:85378"/>
    </reaction>
    <physiologicalReaction direction="left-to-right" evidence="1">
        <dbReference type="Rhea" id="RHEA:45689"/>
    </physiologicalReaction>
</comment>
<comment type="subcellular location">
    <subcellularLocation>
        <location evidence="1">Cytoplasm</location>
        <location evidence="1">Cytosol</location>
    </subcellularLocation>
    <subcellularLocation>
        <location evidence="1">Golgi apparatus</location>
        <location evidence="1">trans-Golgi network membrane</location>
        <topology evidence="1">Peripheral membrane protein</topology>
    </subcellularLocation>
    <subcellularLocation>
        <location evidence="1">Cell membrane</location>
        <topology evidence="1">Peripheral membrane protein</topology>
        <orientation evidence="1">Cytoplasmic side</orientation>
    </subcellularLocation>
    <subcellularLocation>
        <location evidence="1">Endosome membrane</location>
        <topology evidence="1">Peripheral membrane protein</topology>
    </subcellularLocation>
    <subcellularLocation>
        <location evidence="1">Nucleus outer membrane</location>
        <topology evidence="1">Peripheral membrane protein</topology>
    </subcellularLocation>
</comment>
<comment type="similarity">
    <text evidence="2">Belongs to the GLTP family.</text>
</comment>
<keyword id="KW-1003">Cell membrane</keyword>
<keyword id="KW-0963">Cytoplasm</keyword>
<keyword id="KW-0967">Endosome</keyword>
<keyword id="KW-0333">Golgi apparatus</keyword>
<keyword id="KW-0445">Lipid transport</keyword>
<keyword id="KW-0446">Lipid-binding</keyword>
<keyword id="KW-0472">Membrane</keyword>
<keyword id="KW-0539">Nucleus</keyword>
<keyword id="KW-1185">Reference proteome</keyword>
<keyword id="KW-0813">Transport</keyword>
<reference key="1">
    <citation type="submission" date="2004-08" db="EMBL/GenBank/DDBJ databases">
        <authorList>
            <consortium name="NIH - Xenopus Gene Collection (XGC) project"/>
        </authorList>
    </citation>
    <scope>NUCLEOTIDE SEQUENCE [LARGE SCALE MRNA]</scope>
    <source>
        <tissue>Embryo</tissue>
    </source>
</reference>